<sequence>MDPNCSCSTGSSCSCAGSCTCKACRCPSCKKSCCSCCPVGCAKCAQGCICKGASDKCSCCA</sequence>
<name>MT1C_SHEEP</name>
<evidence type="ECO:0000250" key="1">
    <source>
        <dbReference type="UniProtKB" id="P02795"/>
    </source>
</evidence>
<evidence type="ECO:0000305" key="2"/>
<keyword id="KW-0479">Metal-binding</keyword>
<keyword id="KW-0480">Metal-thiolate cluster</keyword>
<keyword id="KW-1185">Reference proteome</keyword>
<protein>
    <recommendedName>
        <fullName>Metallothionein-1C</fullName>
        <shortName>MT-1C</shortName>
    </recommendedName>
    <alternativeName>
        <fullName>Metallothionein-IC</fullName>
        <shortName>MT-IC</shortName>
    </alternativeName>
</protein>
<reference key="1">
    <citation type="journal article" date="1988" name="Eur. J. Biochem.">
        <title>The sheep metallothionein gene family. Structure, sequence and evolutionary relationship of five linked genes.</title>
        <authorList>
            <person name="Peterson M.G."/>
            <person name="Hannan F."/>
            <person name="Mercer J.F.B."/>
        </authorList>
    </citation>
    <scope>NUCLEOTIDE SEQUENCE [GENOMIC DNA]</scope>
</reference>
<gene>
    <name type="primary">MT1C</name>
    <name type="synonym">MT-IC</name>
</gene>
<comment type="function">
    <text>Metallothioneins have a high content of cysteine residues that bind various heavy metals; these proteins are transcriptionally regulated by both heavy metals and glucocorticoids.</text>
</comment>
<comment type="domain">
    <text>Class I metallothioneins contain 2 metal-binding domains: four divalent ions are chelated within cluster A of the alpha domain and are coordinated via cysteinyl thiolate bridges to 11 cysteine ligands. Cluster B, the corresponding region within the beta domain, can ligate three divalent ions to 9 cysteines.</text>
</comment>
<comment type="similarity">
    <text evidence="2">Belongs to the metallothionein superfamily. Type 1 family.</text>
</comment>
<organism>
    <name type="scientific">Ovis aries</name>
    <name type="common">Sheep</name>
    <dbReference type="NCBI Taxonomy" id="9940"/>
    <lineage>
        <taxon>Eukaryota</taxon>
        <taxon>Metazoa</taxon>
        <taxon>Chordata</taxon>
        <taxon>Craniata</taxon>
        <taxon>Vertebrata</taxon>
        <taxon>Euteleostomi</taxon>
        <taxon>Mammalia</taxon>
        <taxon>Eutheria</taxon>
        <taxon>Laurasiatheria</taxon>
        <taxon>Artiodactyla</taxon>
        <taxon>Ruminantia</taxon>
        <taxon>Pecora</taxon>
        <taxon>Bovidae</taxon>
        <taxon>Caprinae</taxon>
        <taxon>Ovis</taxon>
    </lineage>
</organism>
<proteinExistence type="inferred from homology"/>
<accession>P09578</accession>
<feature type="chain" id="PRO_0000197229" description="Metallothionein-1C">
    <location>
        <begin position="1"/>
        <end position="61"/>
    </location>
</feature>
<feature type="region of interest" description="Beta">
    <location>
        <begin position="1"/>
        <end position="29"/>
    </location>
</feature>
<feature type="region of interest" description="Alpha">
    <location>
        <begin position="30"/>
        <end position="61"/>
    </location>
</feature>
<feature type="binding site" evidence="1">
    <location>
        <position position="5"/>
    </location>
    <ligand>
        <name>a divalent metal cation</name>
        <dbReference type="ChEBI" id="CHEBI:60240"/>
        <label>1</label>
        <note>in cluster B</note>
    </ligand>
</feature>
<feature type="binding site" evidence="1">
    <location>
        <position position="7"/>
    </location>
    <ligand>
        <name>a divalent metal cation</name>
        <dbReference type="ChEBI" id="CHEBI:60240"/>
        <label>1</label>
        <note>in cluster B</note>
    </ligand>
</feature>
<feature type="binding site" evidence="1">
    <location>
        <position position="7"/>
    </location>
    <ligand>
        <name>a divalent metal cation</name>
        <dbReference type="ChEBI" id="CHEBI:60240"/>
        <label>2</label>
        <note>in cluster B</note>
    </ligand>
</feature>
<feature type="binding site" evidence="1">
    <location>
        <position position="13"/>
    </location>
    <ligand>
        <name>a divalent metal cation</name>
        <dbReference type="ChEBI" id="CHEBI:60240"/>
        <label>2</label>
        <note>in cluster B</note>
    </ligand>
</feature>
<feature type="binding site" evidence="1">
    <location>
        <position position="15"/>
    </location>
    <ligand>
        <name>a divalent metal cation</name>
        <dbReference type="ChEBI" id="CHEBI:60240"/>
        <label>2</label>
        <note>in cluster B</note>
    </ligand>
</feature>
<feature type="binding site" evidence="1">
    <location>
        <position position="15"/>
    </location>
    <ligand>
        <name>a divalent metal cation</name>
        <dbReference type="ChEBI" id="CHEBI:60240"/>
        <label>3</label>
        <note>in cluster B</note>
    </ligand>
</feature>
<feature type="binding site" evidence="1">
    <location>
        <position position="19"/>
    </location>
    <ligand>
        <name>a divalent metal cation</name>
        <dbReference type="ChEBI" id="CHEBI:60240"/>
        <label>3</label>
        <note>in cluster B</note>
    </ligand>
</feature>
<feature type="binding site" evidence="1">
    <location>
        <position position="21"/>
    </location>
    <ligand>
        <name>a divalent metal cation</name>
        <dbReference type="ChEBI" id="CHEBI:60240"/>
        <label>1</label>
        <note>in cluster B</note>
    </ligand>
</feature>
<feature type="binding site" evidence="1">
    <location>
        <position position="24"/>
    </location>
    <ligand>
        <name>a divalent metal cation</name>
        <dbReference type="ChEBI" id="CHEBI:60240"/>
        <label>1</label>
        <note>in cluster B</note>
    </ligand>
</feature>
<feature type="binding site" evidence="1">
    <location>
        <position position="24"/>
    </location>
    <ligand>
        <name>a divalent metal cation</name>
        <dbReference type="ChEBI" id="CHEBI:60240"/>
        <label>3</label>
        <note>in cluster B</note>
    </ligand>
</feature>
<feature type="binding site" evidence="1">
    <location>
        <position position="26"/>
    </location>
    <ligand>
        <name>a divalent metal cation</name>
        <dbReference type="ChEBI" id="CHEBI:60240"/>
        <label>2</label>
        <note>in cluster B</note>
    </ligand>
</feature>
<feature type="binding site" evidence="1">
    <location>
        <position position="29"/>
    </location>
    <ligand>
        <name>a divalent metal cation</name>
        <dbReference type="ChEBI" id="CHEBI:60240"/>
        <label>3</label>
        <note>in cluster B</note>
    </ligand>
</feature>
<feature type="binding site" evidence="1">
    <location>
        <position position="33"/>
    </location>
    <ligand>
        <name>a divalent metal cation</name>
        <dbReference type="ChEBI" id="CHEBI:60240"/>
        <label>4</label>
        <note>in cluster A</note>
    </ligand>
</feature>
<feature type="binding site" evidence="1">
    <location>
        <position position="34"/>
    </location>
    <ligand>
        <name>a divalent metal cation</name>
        <dbReference type="ChEBI" id="CHEBI:60240"/>
        <label>4</label>
        <note>in cluster A</note>
    </ligand>
</feature>
<feature type="binding site" evidence="1">
    <location>
        <position position="34"/>
    </location>
    <ligand>
        <name>a divalent metal cation</name>
        <dbReference type="ChEBI" id="CHEBI:60240"/>
        <label>5</label>
        <note>in cluster A</note>
    </ligand>
</feature>
<feature type="binding site" evidence="1">
    <location>
        <position position="36"/>
    </location>
    <ligand>
        <name>a divalent metal cation</name>
        <dbReference type="ChEBI" id="CHEBI:60240"/>
        <label>5</label>
        <note>in cluster A</note>
    </ligand>
</feature>
<feature type="binding site" evidence="1">
    <location>
        <position position="37"/>
    </location>
    <ligand>
        <name>a divalent metal cation</name>
        <dbReference type="ChEBI" id="CHEBI:60240"/>
        <label>5</label>
        <note>in cluster A</note>
    </ligand>
</feature>
<feature type="binding site" evidence="1">
    <location>
        <position position="37"/>
    </location>
    <ligand>
        <name>a divalent metal cation</name>
        <dbReference type="ChEBI" id="CHEBI:60240"/>
        <label>6</label>
        <note>in cluster A</note>
    </ligand>
</feature>
<feature type="binding site" evidence="1">
    <location>
        <position position="41"/>
    </location>
    <ligand>
        <name>a divalent metal cation</name>
        <dbReference type="ChEBI" id="CHEBI:60240"/>
        <label>6</label>
        <note>in cluster A</note>
    </ligand>
</feature>
<feature type="binding site" evidence="1">
    <location>
        <position position="44"/>
    </location>
    <ligand>
        <name>a divalent metal cation</name>
        <dbReference type="ChEBI" id="CHEBI:60240"/>
        <label>4</label>
        <note>in cluster A</note>
    </ligand>
</feature>
<feature type="binding site" evidence="1">
    <location>
        <position position="44"/>
    </location>
    <ligand>
        <name>a divalent metal cation</name>
        <dbReference type="ChEBI" id="CHEBI:60240"/>
        <label>6</label>
        <note>in cluster A</note>
    </ligand>
</feature>
<feature type="binding site" evidence="1">
    <location>
        <position position="48"/>
    </location>
    <ligand>
        <name>a divalent metal cation</name>
        <dbReference type="ChEBI" id="CHEBI:60240"/>
        <label>4</label>
        <note>in cluster A</note>
    </ligand>
</feature>
<feature type="binding site" evidence="1">
    <location>
        <position position="50"/>
    </location>
    <ligand>
        <name>a divalent metal cation</name>
        <dbReference type="ChEBI" id="CHEBI:60240"/>
        <label>5</label>
        <note>in cluster A</note>
    </ligand>
</feature>
<feature type="binding site" evidence="1">
    <location>
        <position position="50"/>
    </location>
    <ligand>
        <name>a divalent metal cation</name>
        <dbReference type="ChEBI" id="CHEBI:60240"/>
        <label>7</label>
        <note>in cluster A</note>
    </ligand>
</feature>
<feature type="binding site" evidence="1">
    <location>
        <position position="57"/>
    </location>
    <ligand>
        <name>a divalent metal cation</name>
        <dbReference type="ChEBI" id="CHEBI:60240"/>
        <label>7</label>
        <note>in cluster A</note>
    </ligand>
</feature>
<feature type="binding site" evidence="1">
    <location>
        <position position="59"/>
    </location>
    <ligand>
        <name>a divalent metal cation</name>
        <dbReference type="ChEBI" id="CHEBI:60240"/>
        <label>7</label>
        <note>in cluster A</note>
    </ligand>
</feature>
<feature type="binding site" evidence="1">
    <location>
        <position position="60"/>
    </location>
    <ligand>
        <name>a divalent metal cation</name>
        <dbReference type="ChEBI" id="CHEBI:60240"/>
        <label>6</label>
        <note>in cluster A</note>
    </ligand>
</feature>
<feature type="binding site" evidence="1">
    <location>
        <position position="60"/>
    </location>
    <ligand>
        <name>a divalent metal cation</name>
        <dbReference type="ChEBI" id="CHEBI:60240"/>
        <label>7</label>
        <note>in cluster A</note>
    </ligand>
</feature>
<dbReference type="EMBL" id="X07974">
    <property type="protein sequence ID" value="CAA30786.1"/>
    <property type="molecule type" value="Genomic_DNA"/>
</dbReference>
<dbReference type="PIR" id="S00810">
    <property type="entry name" value="S00810"/>
</dbReference>
<dbReference type="SMR" id="P09578"/>
<dbReference type="Ensembl" id="ENSOART00025013145">
    <property type="protein sequence ID" value="ENSOARP00025006590"/>
    <property type="gene ID" value="ENSOARG00025007961"/>
</dbReference>
<dbReference type="Ensembl" id="ENSOART00040040565">
    <property type="protein sequence ID" value="ENSOARP00040021008"/>
    <property type="gene ID" value="ENSOARG00040024363"/>
</dbReference>
<dbReference type="Ensembl" id="ENSOART00180007774">
    <property type="protein sequence ID" value="ENSOARP00180003918"/>
    <property type="gene ID" value="ENSOARG00180004811"/>
</dbReference>
<dbReference type="Ensembl" id="ENSOART00185041592">
    <property type="protein sequence ID" value="ENSOARP00185020586"/>
    <property type="gene ID" value="ENSOARG00185025261"/>
</dbReference>
<dbReference type="Ensembl" id="ENSOART00215049897">
    <property type="protein sequence ID" value="ENSOARP00215025830"/>
    <property type="gene ID" value="ENSOARG00215029881"/>
</dbReference>
<dbReference type="Ensembl" id="ENSOART00220024787">
    <property type="protein sequence ID" value="ENSOARP00220013617"/>
    <property type="gene ID" value="ENSOARG00220014909"/>
</dbReference>
<dbReference type="Ensembl" id="ENSOART00225007898">
    <property type="protein sequence ID" value="ENSOARP00225003699"/>
    <property type="gene ID" value="ENSOARG00225004826"/>
</dbReference>
<dbReference type="GeneID" id="101117691"/>
<dbReference type="KEGG" id="oas:101117691"/>
<dbReference type="Proteomes" id="UP000002356">
    <property type="component" value="Unplaced"/>
</dbReference>
<dbReference type="GO" id="GO:0005737">
    <property type="term" value="C:cytoplasm"/>
    <property type="evidence" value="ECO:0000250"/>
    <property type="project" value="UniProtKB"/>
</dbReference>
<dbReference type="GO" id="GO:0005634">
    <property type="term" value="C:nucleus"/>
    <property type="evidence" value="ECO:0000250"/>
    <property type="project" value="UniProtKB"/>
</dbReference>
<dbReference type="GO" id="GO:0008270">
    <property type="term" value="F:zinc ion binding"/>
    <property type="evidence" value="ECO:0000250"/>
    <property type="project" value="UniProtKB"/>
</dbReference>
<dbReference type="GO" id="GO:0071276">
    <property type="term" value="P:cellular response to cadmium ion"/>
    <property type="evidence" value="ECO:0007669"/>
    <property type="project" value="TreeGrafter"/>
</dbReference>
<dbReference type="GO" id="GO:0071280">
    <property type="term" value="P:cellular response to copper ion"/>
    <property type="evidence" value="ECO:0007669"/>
    <property type="project" value="TreeGrafter"/>
</dbReference>
<dbReference type="GO" id="GO:0071294">
    <property type="term" value="P:cellular response to zinc ion"/>
    <property type="evidence" value="ECO:0000250"/>
    <property type="project" value="UniProtKB"/>
</dbReference>
<dbReference type="GO" id="GO:0010273">
    <property type="term" value="P:detoxification of copper ion"/>
    <property type="evidence" value="ECO:0007669"/>
    <property type="project" value="TreeGrafter"/>
</dbReference>
<dbReference type="GO" id="GO:0006882">
    <property type="term" value="P:intracellular zinc ion homeostasis"/>
    <property type="evidence" value="ECO:0007669"/>
    <property type="project" value="TreeGrafter"/>
</dbReference>
<dbReference type="GO" id="GO:0045926">
    <property type="term" value="P:negative regulation of growth"/>
    <property type="evidence" value="ECO:0000250"/>
    <property type="project" value="UniProtKB"/>
</dbReference>
<dbReference type="FunFam" id="4.10.10.10:FF:000001">
    <property type="entry name" value="Metallothionein"/>
    <property type="match status" value="1"/>
</dbReference>
<dbReference type="Gene3D" id="4.10.10.10">
    <property type="entry name" value="Metallothionein Isoform II"/>
    <property type="match status" value="1"/>
</dbReference>
<dbReference type="InterPro" id="IPR017854">
    <property type="entry name" value="Metalthion_dom_sf"/>
</dbReference>
<dbReference type="InterPro" id="IPR023587">
    <property type="entry name" value="Metalthion_dom_sf_vert"/>
</dbReference>
<dbReference type="InterPro" id="IPR000006">
    <property type="entry name" value="Metalthion_vert"/>
</dbReference>
<dbReference type="InterPro" id="IPR018064">
    <property type="entry name" value="Metalthion_vert_metal_BS"/>
</dbReference>
<dbReference type="PANTHER" id="PTHR23299">
    <property type="entry name" value="METALLOTHIONEIN"/>
    <property type="match status" value="1"/>
</dbReference>
<dbReference type="PANTHER" id="PTHR23299:SF22">
    <property type="entry name" value="METALLOTHIONEIN-1G"/>
    <property type="match status" value="1"/>
</dbReference>
<dbReference type="Pfam" id="PF00131">
    <property type="entry name" value="Metallothio"/>
    <property type="match status" value="1"/>
</dbReference>
<dbReference type="PRINTS" id="PR00860">
    <property type="entry name" value="MTVERTEBRATE"/>
</dbReference>
<dbReference type="SUPFAM" id="SSF57868">
    <property type="entry name" value="Metallothionein"/>
    <property type="match status" value="1"/>
</dbReference>
<dbReference type="PROSITE" id="PS00203">
    <property type="entry name" value="METALLOTHIONEIN_VRT"/>
    <property type="match status" value="1"/>
</dbReference>